<comment type="function">
    <text evidence="1">Binds copper, nickel, and fatty acids as well as, and bilirubin less well than, serum albumin.</text>
</comment>
<comment type="subunit">
    <text evidence="1">Dimeric and trimeric forms have been found in addition to the monomeric form.</text>
</comment>
<comment type="subcellular location">
    <subcellularLocation>
        <location evidence="4">Secreted</location>
    </subcellularLocation>
</comment>
<comment type="tissue specificity">
    <text>Plasma. Synthesized by the fetal liver and yolk sac.</text>
</comment>
<comment type="similarity">
    <text evidence="4">Belongs to the ALB/AFP/VDB family.</text>
</comment>
<feature type="signal peptide" evidence="1">
    <location>
        <begin position="1"/>
        <end position="18"/>
    </location>
</feature>
<feature type="chain" id="PRO_0000321958" description="Alpha-fetoprotein">
    <location>
        <begin position="19"/>
        <end position="610"/>
    </location>
</feature>
<feature type="domain" description="Albumin 1" evidence="4">
    <location>
        <begin position="19"/>
        <end position="210"/>
    </location>
</feature>
<feature type="domain" description="Albumin 2" evidence="4">
    <location>
        <begin position="211"/>
        <end position="403"/>
    </location>
</feature>
<feature type="domain" description="Albumin 3" evidence="4">
    <location>
        <begin position="404"/>
        <end position="602"/>
    </location>
</feature>
<feature type="binding site" evidence="1">
    <location>
        <position position="22"/>
    </location>
    <ligand>
        <name>Cu(2+)</name>
        <dbReference type="ChEBI" id="CHEBI:29036"/>
    </ligand>
</feature>
<feature type="modified residue" description="Phosphoserine" evidence="2">
    <location>
        <position position="111"/>
    </location>
</feature>
<feature type="modified residue" description="Phosphoserine" evidence="2">
    <location>
        <position position="115"/>
    </location>
</feature>
<feature type="modified residue" description="Phosphoserine" evidence="2">
    <location>
        <position position="117"/>
    </location>
</feature>
<feature type="modified residue" description="Phosphoserine" evidence="2">
    <location>
        <position position="345"/>
    </location>
</feature>
<feature type="glycosylation site" description="N-linked (GlcNAc...) asparagine" evidence="3">
    <location>
        <position position="251"/>
    </location>
</feature>
<feature type="disulfide bond" evidence="4">
    <location>
        <begin position="99"/>
        <end position="114"/>
    </location>
</feature>
<feature type="disulfide bond" evidence="4">
    <location>
        <begin position="113"/>
        <end position="124"/>
    </location>
</feature>
<feature type="disulfide bond" evidence="4">
    <location>
        <begin position="148"/>
        <end position="193"/>
    </location>
</feature>
<feature type="disulfide bond" evidence="4">
    <location>
        <begin position="192"/>
        <end position="201"/>
    </location>
</feature>
<feature type="disulfide bond" evidence="4">
    <location>
        <begin position="224"/>
        <end position="270"/>
    </location>
</feature>
<feature type="disulfide bond" evidence="4">
    <location>
        <begin position="269"/>
        <end position="277"/>
    </location>
</feature>
<feature type="disulfide bond" evidence="4">
    <location>
        <begin position="289"/>
        <end position="303"/>
    </location>
</feature>
<feature type="disulfide bond" evidence="4">
    <location>
        <begin position="302"/>
        <end position="314"/>
    </location>
</feature>
<feature type="disulfide bond" evidence="4">
    <location>
        <begin position="385"/>
        <end position="394"/>
    </location>
</feature>
<feature type="disulfide bond" evidence="4">
    <location>
        <begin position="417"/>
        <end position="463"/>
    </location>
</feature>
<feature type="disulfide bond" evidence="4">
    <location>
        <begin position="462"/>
        <end position="473"/>
    </location>
</feature>
<feature type="disulfide bond" evidence="4">
    <location>
        <begin position="486"/>
        <end position="502"/>
    </location>
</feature>
<feature type="disulfide bond" evidence="4">
    <location>
        <begin position="501"/>
        <end position="512"/>
    </location>
</feature>
<feature type="disulfide bond" evidence="4">
    <location>
        <begin position="539"/>
        <end position="584"/>
    </location>
</feature>
<feature type="disulfide bond" evidence="4">
    <location>
        <begin position="583"/>
        <end position="592"/>
    </location>
</feature>
<dbReference type="EMBL" id="AF517770">
    <property type="protein sequence ID" value="AAM66710.1"/>
    <property type="molecule type" value="mRNA"/>
</dbReference>
<dbReference type="RefSeq" id="NP_999482.1">
    <property type="nucleotide sequence ID" value="NM_214317.1"/>
</dbReference>
<dbReference type="SMR" id="Q8MJ76"/>
<dbReference type="FunCoup" id="Q8MJ76">
    <property type="interactions" value="257"/>
</dbReference>
<dbReference type="STRING" id="9823.ENSSSCP00000009550"/>
<dbReference type="GlyCosmos" id="Q8MJ76">
    <property type="glycosylation" value="1 site, No reported glycans"/>
</dbReference>
<dbReference type="GlyGen" id="Q8MJ76">
    <property type="glycosylation" value="1 site"/>
</dbReference>
<dbReference type="PaxDb" id="9823-ENSSSCP00000009550"/>
<dbReference type="PeptideAtlas" id="Q8MJ76"/>
<dbReference type="Ensembl" id="ENSSSCT00000009803.3">
    <property type="protein sequence ID" value="ENSSSCP00000009550.2"/>
    <property type="gene ID" value="ENSSSCG00000008949.5"/>
</dbReference>
<dbReference type="Ensembl" id="ENSSSCT00015102417.1">
    <property type="protein sequence ID" value="ENSSSCP00015042518.1"/>
    <property type="gene ID" value="ENSSSCG00015075988.1"/>
</dbReference>
<dbReference type="Ensembl" id="ENSSSCT00025024215.1">
    <property type="protein sequence ID" value="ENSSSCP00025010246.1"/>
    <property type="gene ID" value="ENSSSCG00025017831.1"/>
</dbReference>
<dbReference type="Ensembl" id="ENSSSCT00030050198.1">
    <property type="protein sequence ID" value="ENSSSCP00030022827.1"/>
    <property type="gene ID" value="ENSSSCG00030036109.1"/>
</dbReference>
<dbReference type="Ensembl" id="ENSSSCT00035066218.1">
    <property type="protein sequence ID" value="ENSSSCP00035026852.1"/>
    <property type="gene ID" value="ENSSSCG00035049651.1"/>
</dbReference>
<dbReference type="Ensembl" id="ENSSSCT00040104307.1">
    <property type="protein sequence ID" value="ENSSSCP00040047489.1"/>
    <property type="gene ID" value="ENSSSCG00040075243.1"/>
</dbReference>
<dbReference type="Ensembl" id="ENSSSCT00050108209.1">
    <property type="protein sequence ID" value="ENSSSCP00050047948.1"/>
    <property type="gene ID" value="ENSSSCG00050078532.1"/>
</dbReference>
<dbReference type="Ensembl" id="ENSSSCT00055060893.1">
    <property type="protein sequence ID" value="ENSSSCP00055048813.1"/>
    <property type="gene ID" value="ENSSSCG00055030552.1"/>
</dbReference>
<dbReference type="Ensembl" id="ENSSSCT00060051862.1">
    <property type="protein sequence ID" value="ENSSSCP00060022071.1"/>
    <property type="gene ID" value="ENSSSCG00060038356.1"/>
</dbReference>
<dbReference type="Ensembl" id="ENSSSCT00065043611.1">
    <property type="protein sequence ID" value="ENSSSCP00065018546.1"/>
    <property type="gene ID" value="ENSSSCG00065032162.1"/>
</dbReference>
<dbReference type="Ensembl" id="ENSSSCT00070012410.1">
    <property type="protein sequence ID" value="ENSSSCP00070010206.1"/>
    <property type="gene ID" value="ENSSSCG00070006487.1"/>
</dbReference>
<dbReference type="Ensembl" id="ENSSSCT00090022308">
    <property type="protein sequence ID" value="ENSSSCP00090013715"/>
    <property type="gene ID" value="ENSSSCG00090012695"/>
</dbReference>
<dbReference type="Ensembl" id="ENSSSCT00105064294">
    <property type="protein sequence ID" value="ENSSSCP00105045731"/>
    <property type="gene ID" value="ENSSSCG00105033730"/>
</dbReference>
<dbReference type="Ensembl" id="ENSSSCT00110019768">
    <property type="protein sequence ID" value="ENSSSCP00110013397"/>
    <property type="gene ID" value="ENSSSCG00110010279"/>
</dbReference>
<dbReference type="Ensembl" id="ENSSSCT00115027565">
    <property type="protein sequence ID" value="ENSSSCP00115026126"/>
    <property type="gene ID" value="ENSSSCG00115015776"/>
</dbReference>
<dbReference type="Ensembl" id="ENSSSCT00130030461">
    <property type="protein sequence ID" value="ENSSSCP00130021209"/>
    <property type="gene ID" value="ENSSSCG00130015349"/>
</dbReference>
<dbReference type="GeneID" id="397586"/>
<dbReference type="KEGG" id="ssc:397586"/>
<dbReference type="CTD" id="174"/>
<dbReference type="VGNC" id="VGNC:85172">
    <property type="gene designation" value="AFP"/>
</dbReference>
<dbReference type="eggNOG" id="ENOG502R7EA">
    <property type="taxonomic scope" value="Eukaryota"/>
</dbReference>
<dbReference type="GeneTree" id="ENSGT00390000000113"/>
<dbReference type="HOGENOM" id="CLU_030161_1_0_1"/>
<dbReference type="InParanoid" id="Q8MJ76"/>
<dbReference type="OMA" id="HEECCRG"/>
<dbReference type="OrthoDB" id="9875082at2759"/>
<dbReference type="TreeFam" id="TF335561"/>
<dbReference type="Reactome" id="R-SSC-381426">
    <property type="pathway name" value="Regulation of Insulin-like Growth Factor (IGF) transport and uptake by Insulin-like Growth Factor Binding Proteins (IGFBPs)"/>
</dbReference>
<dbReference type="Reactome" id="R-SSC-8957275">
    <property type="pathway name" value="Post-translational protein phosphorylation"/>
</dbReference>
<dbReference type="Proteomes" id="UP000008227">
    <property type="component" value="Chromosome 8"/>
</dbReference>
<dbReference type="Proteomes" id="UP000314985">
    <property type="component" value="Chromosome 8"/>
</dbReference>
<dbReference type="Proteomes" id="UP000694570">
    <property type="component" value="Unplaced"/>
</dbReference>
<dbReference type="Proteomes" id="UP000694571">
    <property type="component" value="Unplaced"/>
</dbReference>
<dbReference type="Proteomes" id="UP000694720">
    <property type="component" value="Unplaced"/>
</dbReference>
<dbReference type="Proteomes" id="UP000694722">
    <property type="component" value="Unplaced"/>
</dbReference>
<dbReference type="Proteomes" id="UP000694723">
    <property type="component" value="Unplaced"/>
</dbReference>
<dbReference type="Proteomes" id="UP000694724">
    <property type="component" value="Unplaced"/>
</dbReference>
<dbReference type="Proteomes" id="UP000694725">
    <property type="component" value="Unplaced"/>
</dbReference>
<dbReference type="Proteomes" id="UP000694726">
    <property type="component" value="Unplaced"/>
</dbReference>
<dbReference type="Proteomes" id="UP000694727">
    <property type="component" value="Unplaced"/>
</dbReference>
<dbReference type="Proteomes" id="UP000694728">
    <property type="component" value="Unplaced"/>
</dbReference>
<dbReference type="Bgee" id="ENSSSCG00000008949">
    <property type="expression patterns" value="Expressed in forelimb bud and 6 other cell types or tissues"/>
</dbReference>
<dbReference type="ExpressionAtlas" id="Q8MJ76">
    <property type="expression patterns" value="differential"/>
</dbReference>
<dbReference type="GO" id="GO:0005737">
    <property type="term" value="C:cytoplasm"/>
    <property type="evidence" value="ECO:0000318"/>
    <property type="project" value="GO_Central"/>
</dbReference>
<dbReference type="GO" id="GO:0005615">
    <property type="term" value="C:extracellular space"/>
    <property type="evidence" value="ECO:0007669"/>
    <property type="project" value="Ensembl"/>
</dbReference>
<dbReference type="GO" id="GO:0046872">
    <property type="term" value="F:metal ion binding"/>
    <property type="evidence" value="ECO:0007669"/>
    <property type="project" value="UniProtKB-KW"/>
</dbReference>
<dbReference type="GO" id="GO:0006915">
    <property type="term" value="P:apoptotic process"/>
    <property type="evidence" value="ECO:0007669"/>
    <property type="project" value="Ensembl"/>
</dbReference>
<dbReference type="GO" id="GO:0048872">
    <property type="term" value="P:homeostasis of number of cells"/>
    <property type="evidence" value="ECO:0007669"/>
    <property type="project" value="Ensembl"/>
</dbReference>
<dbReference type="GO" id="GO:0006955">
    <property type="term" value="P:immune response"/>
    <property type="evidence" value="ECO:0007669"/>
    <property type="project" value="Ensembl"/>
</dbReference>
<dbReference type="GO" id="GO:0001542">
    <property type="term" value="P:ovulation from ovarian follicle"/>
    <property type="evidence" value="ECO:0007669"/>
    <property type="project" value="Ensembl"/>
</dbReference>
<dbReference type="GO" id="GO:0042448">
    <property type="term" value="P:progesterone metabolic process"/>
    <property type="evidence" value="ECO:0007669"/>
    <property type="project" value="Ensembl"/>
</dbReference>
<dbReference type="CDD" id="cd00015">
    <property type="entry name" value="ALBUMIN"/>
    <property type="match status" value="3"/>
</dbReference>
<dbReference type="FunFam" id="1.10.246.10:FF:000001">
    <property type="entry name" value="Serum albumin"/>
    <property type="match status" value="2"/>
</dbReference>
<dbReference type="FunFam" id="1.10.246.10:FF:000002">
    <property type="entry name" value="Serum albumin"/>
    <property type="match status" value="2"/>
</dbReference>
<dbReference type="FunFam" id="1.10.246.10:FF:000004">
    <property type="entry name" value="Serum albumin"/>
    <property type="match status" value="1"/>
</dbReference>
<dbReference type="Gene3D" id="1.10.246.10">
    <property type="match status" value="6"/>
</dbReference>
<dbReference type="InterPro" id="IPR000264">
    <property type="entry name" value="ALB/AFP/VDB"/>
</dbReference>
<dbReference type="InterPro" id="IPR020858">
    <property type="entry name" value="Serum_albumin-like"/>
</dbReference>
<dbReference type="InterPro" id="IPR021177">
    <property type="entry name" value="Serum_albumin/AFP/Afamin"/>
</dbReference>
<dbReference type="InterPro" id="IPR020857">
    <property type="entry name" value="Serum_albumin_CS"/>
</dbReference>
<dbReference type="InterPro" id="IPR014760">
    <property type="entry name" value="Serum_albumin_N"/>
</dbReference>
<dbReference type="PANTHER" id="PTHR11385:SF7">
    <property type="entry name" value="ALPHA-FETOPROTEIN"/>
    <property type="match status" value="1"/>
</dbReference>
<dbReference type="PANTHER" id="PTHR11385">
    <property type="entry name" value="SERUM ALBUMIN-RELATED"/>
    <property type="match status" value="1"/>
</dbReference>
<dbReference type="Pfam" id="PF00273">
    <property type="entry name" value="Serum_albumin"/>
    <property type="match status" value="3"/>
</dbReference>
<dbReference type="PIRSF" id="PIRSF002520">
    <property type="entry name" value="Serum_albumin_subgroup"/>
    <property type="match status" value="1"/>
</dbReference>
<dbReference type="PRINTS" id="PR00803">
    <property type="entry name" value="AFETOPROTEIN"/>
</dbReference>
<dbReference type="PRINTS" id="PR00802">
    <property type="entry name" value="SERUMALBUMIN"/>
</dbReference>
<dbReference type="SMART" id="SM00103">
    <property type="entry name" value="ALBUMIN"/>
    <property type="match status" value="3"/>
</dbReference>
<dbReference type="SUPFAM" id="SSF48552">
    <property type="entry name" value="Serum albumin-like"/>
    <property type="match status" value="3"/>
</dbReference>
<dbReference type="PROSITE" id="PS00212">
    <property type="entry name" value="ALBUMIN_1"/>
    <property type="match status" value="2"/>
</dbReference>
<dbReference type="PROSITE" id="PS51438">
    <property type="entry name" value="ALBUMIN_2"/>
    <property type="match status" value="3"/>
</dbReference>
<keyword id="KW-0186">Copper</keyword>
<keyword id="KW-1015">Disulfide bond</keyword>
<keyword id="KW-0325">Glycoprotein</keyword>
<keyword id="KW-0479">Metal-binding</keyword>
<keyword id="KW-0533">Nickel</keyword>
<keyword id="KW-0597">Phosphoprotein</keyword>
<keyword id="KW-1185">Reference proteome</keyword>
<keyword id="KW-0677">Repeat</keyword>
<keyword id="KW-0964">Secreted</keyword>
<keyword id="KW-0732">Signal</keyword>
<keyword id="KW-0765">Sulfation</keyword>
<reference key="1">
    <citation type="journal article" date="2002" name="Anim. Genet.">
        <title>Mapping of the porcine alpha-fetoprotein (AFP) gene to swine chromosome 8.</title>
        <authorList>
            <person name="Kim J.G."/>
            <person name="Nonneman D."/>
            <person name="Vallet J.L."/>
            <person name="Christenson R.K."/>
        </authorList>
    </citation>
    <scope>NUCLEOTIDE SEQUENCE [MRNA]</scope>
</reference>
<sequence>MKWVVSIFLIVLLNFTESRTMHENAYGIASILDSSQCSAEMNLVDLATIFFAQFVQEATYKEVNQMVKDVLTVIEKSTGSEQPAGCLENQVSVFLEEICHEEEIPEKYGLSHCCSQSGEERHNCFLARKKAAPASIPPFQVPEPVTSCKAYEENRELFMTRYIYEIARRHPFLYAPTILSLAAQYDKIIPPCCKAENAVECFQTKAASITKELRESSLLNQHMCTVMRQFGARTFRAITVTKLSQKFPKANFTEIQKLVLDVAHIHEECCRGNVLECLQDAERVVSYVCSQQDTLSSKIAECCKLPTTLELGQCIIHAENDDKPEGLSPNLNRFLGERDFNQLSSREKDLSMARFTYEYSRRHPKLAVPVILRVAKGYQELLEKCSQSENPLECQDKGEEELEKYIQESQALAKRSCGLFQKLGEYYLQNAFLVAYTKKAPQLTPPELMALTRKMATTGAACCHLSEDRQLACGEGAADLIIGQLCIRHEEMPINPGVGQCCTSSYANRRPCFSSLVLDETYVPPPFSDDKFIFHKDLCQAQGVALQTMKQQFLINLVKQKPQITEEQLEAVIADFSGLLEKCCQGQEQEVCFAEEGPALISKTRASLGV</sequence>
<protein>
    <recommendedName>
        <fullName>Alpha-fetoprotein</fullName>
    </recommendedName>
    <alternativeName>
        <fullName>Alpha-1-fetoprotein</fullName>
    </alternativeName>
    <alternativeName>
        <fullName>Alpha-fetoglobulin</fullName>
    </alternativeName>
</protein>
<accession>Q8MJ76</accession>
<proteinExistence type="evidence at transcript level"/>
<gene>
    <name type="primary">AFP</name>
</gene>
<name>FETA_PIG</name>
<evidence type="ECO:0000250" key="1"/>
<evidence type="ECO:0000250" key="2">
    <source>
        <dbReference type="UniProtKB" id="P02771"/>
    </source>
</evidence>
<evidence type="ECO:0000255" key="3"/>
<evidence type="ECO:0000255" key="4">
    <source>
        <dbReference type="PROSITE-ProRule" id="PRU00769"/>
    </source>
</evidence>
<organism>
    <name type="scientific">Sus scrofa</name>
    <name type="common">Pig</name>
    <dbReference type="NCBI Taxonomy" id="9823"/>
    <lineage>
        <taxon>Eukaryota</taxon>
        <taxon>Metazoa</taxon>
        <taxon>Chordata</taxon>
        <taxon>Craniata</taxon>
        <taxon>Vertebrata</taxon>
        <taxon>Euteleostomi</taxon>
        <taxon>Mammalia</taxon>
        <taxon>Eutheria</taxon>
        <taxon>Laurasiatheria</taxon>
        <taxon>Artiodactyla</taxon>
        <taxon>Suina</taxon>
        <taxon>Suidae</taxon>
        <taxon>Sus</taxon>
    </lineage>
</organism>